<gene>
    <name evidence="1" type="primary">tsf</name>
    <name type="ordered locus">HD_1599</name>
</gene>
<reference key="1">
    <citation type="submission" date="2003-06" db="EMBL/GenBank/DDBJ databases">
        <title>The complete genome sequence of Haemophilus ducreyi.</title>
        <authorList>
            <person name="Munson R.S. Jr."/>
            <person name="Ray W.C."/>
            <person name="Mahairas G."/>
            <person name="Sabo P."/>
            <person name="Mungur R."/>
            <person name="Johnson L."/>
            <person name="Nguyen D."/>
            <person name="Wang J."/>
            <person name="Forst C."/>
            <person name="Hood L."/>
        </authorList>
    </citation>
    <scope>NUCLEOTIDE SEQUENCE [LARGE SCALE GENOMIC DNA]</scope>
    <source>
        <strain>35000HP / ATCC 700724</strain>
    </source>
</reference>
<evidence type="ECO:0000255" key="1">
    <source>
        <dbReference type="HAMAP-Rule" id="MF_00050"/>
    </source>
</evidence>
<accession>Q7VL80</accession>
<comment type="function">
    <text evidence="1">Associates with the EF-Tu.GDP complex and induces the exchange of GDP to GTP. It remains bound to the aminoacyl-tRNA.EF-Tu.GTP complex up to the GTP hydrolysis stage on the ribosome.</text>
</comment>
<comment type="subcellular location">
    <subcellularLocation>
        <location evidence="1">Cytoplasm</location>
    </subcellularLocation>
</comment>
<comment type="similarity">
    <text evidence="1">Belongs to the EF-Ts family.</text>
</comment>
<protein>
    <recommendedName>
        <fullName evidence="1">Elongation factor Ts</fullName>
        <shortName evidence="1">EF-Ts</shortName>
    </recommendedName>
</protein>
<feature type="chain" id="PRO_0000161127" description="Elongation factor Ts">
    <location>
        <begin position="1"/>
        <end position="283"/>
    </location>
</feature>
<feature type="region of interest" description="Involved in Mg(2+) ion dislocation from EF-Tu" evidence="1">
    <location>
        <begin position="80"/>
        <end position="83"/>
    </location>
</feature>
<dbReference type="EMBL" id="AE017143">
    <property type="protein sequence ID" value="AAP96379.1"/>
    <property type="molecule type" value="Genomic_DNA"/>
</dbReference>
<dbReference type="RefSeq" id="WP_010945411.1">
    <property type="nucleotide sequence ID" value="NC_002940.2"/>
</dbReference>
<dbReference type="SMR" id="Q7VL80"/>
<dbReference type="STRING" id="233412.HD_1599"/>
<dbReference type="KEGG" id="hdu:HD_1599"/>
<dbReference type="eggNOG" id="COG0264">
    <property type="taxonomic scope" value="Bacteria"/>
</dbReference>
<dbReference type="HOGENOM" id="CLU_047155_0_2_6"/>
<dbReference type="OrthoDB" id="9808348at2"/>
<dbReference type="Proteomes" id="UP000001022">
    <property type="component" value="Chromosome"/>
</dbReference>
<dbReference type="GO" id="GO:0005737">
    <property type="term" value="C:cytoplasm"/>
    <property type="evidence" value="ECO:0007669"/>
    <property type="project" value="UniProtKB-SubCell"/>
</dbReference>
<dbReference type="GO" id="GO:0003746">
    <property type="term" value="F:translation elongation factor activity"/>
    <property type="evidence" value="ECO:0007669"/>
    <property type="project" value="UniProtKB-UniRule"/>
</dbReference>
<dbReference type="CDD" id="cd14275">
    <property type="entry name" value="UBA_EF-Ts"/>
    <property type="match status" value="1"/>
</dbReference>
<dbReference type="FunFam" id="1.10.286.20:FF:000001">
    <property type="entry name" value="Elongation factor Ts"/>
    <property type="match status" value="1"/>
</dbReference>
<dbReference type="FunFam" id="1.10.8.10:FF:000001">
    <property type="entry name" value="Elongation factor Ts"/>
    <property type="match status" value="1"/>
</dbReference>
<dbReference type="FunFam" id="3.30.479.20:FF:000001">
    <property type="entry name" value="Elongation factor Ts"/>
    <property type="match status" value="1"/>
</dbReference>
<dbReference type="Gene3D" id="1.10.286.20">
    <property type="match status" value="1"/>
</dbReference>
<dbReference type="Gene3D" id="1.10.8.10">
    <property type="entry name" value="DNA helicase RuvA subunit, C-terminal domain"/>
    <property type="match status" value="1"/>
</dbReference>
<dbReference type="Gene3D" id="3.30.479.20">
    <property type="entry name" value="Elongation factor Ts, dimerisation domain"/>
    <property type="match status" value="2"/>
</dbReference>
<dbReference type="HAMAP" id="MF_00050">
    <property type="entry name" value="EF_Ts"/>
    <property type="match status" value="1"/>
</dbReference>
<dbReference type="InterPro" id="IPR036402">
    <property type="entry name" value="EF-Ts_dimer_sf"/>
</dbReference>
<dbReference type="InterPro" id="IPR001816">
    <property type="entry name" value="Transl_elong_EFTs/EF1B"/>
</dbReference>
<dbReference type="InterPro" id="IPR014039">
    <property type="entry name" value="Transl_elong_EFTs/EF1B_dimer"/>
</dbReference>
<dbReference type="InterPro" id="IPR018101">
    <property type="entry name" value="Transl_elong_Ts_CS"/>
</dbReference>
<dbReference type="InterPro" id="IPR009060">
    <property type="entry name" value="UBA-like_sf"/>
</dbReference>
<dbReference type="NCBIfam" id="TIGR00116">
    <property type="entry name" value="tsf"/>
    <property type="match status" value="1"/>
</dbReference>
<dbReference type="PANTHER" id="PTHR11741">
    <property type="entry name" value="ELONGATION FACTOR TS"/>
    <property type="match status" value="1"/>
</dbReference>
<dbReference type="PANTHER" id="PTHR11741:SF0">
    <property type="entry name" value="ELONGATION FACTOR TS, MITOCHONDRIAL"/>
    <property type="match status" value="1"/>
</dbReference>
<dbReference type="Pfam" id="PF00889">
    <property type="entry name" value="EF_TS"/>
    <property type="match status" value="1"/>
</dbReference>
<dbReference type="SUPFAM" id="SSF54713">
    <property type="entry name" value="Elongation factor Ts (EF-Ts), dimerisation domain"/>
    <property type="match status" value="2"/>
</dbReference>
<dbReference type="SUPFAM" id="SSF46934">
    <property type="entry name" value="UBA-like"/>
    <property type="match status" value="1"/>
</dbReference>
<dbReference type="PROSITE" id="PS01126">
    <property type="entry name" value="EF_TS_1"/>
    <property type="match status" value="1"/>
</dbReference>
<dbReference type="PROSITE" id="PS01127">
    <property type="entry name" value="EF_TS_2"/>
    <property type="match status" value="1"/>
</dbReference>
<sequence>MAEITASLVKELRERTGAGMMECKKALVEANGDIELAIDNMRKSGQAKAAKKAGRVAAEGVILARVASGFGVLVEMNCETDFVAKDAGFLDLANEVADFAVANKGTTIEALAAQFEEKRASLVAKIGENMNIRRIQYLEGEIIAQYLHGAKIGVLVAGQGSDEELKKVAMHVAASKPEFVNPEDVSAAVVEHERQIQIEIAMNSGKPKEIAEKMVEGRMKKFTGEVSLTGQPFVMDPSQSVGDYLKSVATSVTNFIRLEVGEGIEKVEEDFAAEVAKITAGNA</sequence>
<keyword id="KW-0963">Cytoplasm</keyword>
<keyword id="KW-0251">Elongation factor</keyword>
<keyword id="KW-0648">Protein biosynthesis</keyword>
<keyword id="KW-1185">Reference proteome</keyword>
<name>EFTS_HAEDU</name>
<proteinExistence type="inferred from homology"/>
<organism>
    <name type="scientific">Haemophilus ducreyi (strain 35000HP / ATCC 700724)</name>
    <dbReference type="NCBI Taxonomy" id="233412"/>
    <lineage>
        <taxon>Bacteria</taxon>
        <taxon>Pseudomonadati</taxon>
        <taxon>Pseudomonadota</taxon>
        <taxon>Gammaproteobacteria</taxon>
        <taxon>Pasteurellales</taxon>
        <taxon>Pasteurellaceae</taxon>
        <taxon>Haemophilus</taxon>
    </lineage>
</organism>